<dbReference type="EMBL" id="AY243312">
    <property type="protein sequence ID" value="AAO89333.1"/>
    <property type="molecule type" value="Genomic_DNA"/>
</dbReference>
<dbReference type="RefSeq" id="YP_232936.1">
    <property type="nucleotide sequence ID" value="NC_006998.1"/>
</dbReference>
<dbReference type="SMR" id="Q80HX4"/>
<dbReference type="DNASU" id="3707511"/>
<dbReference type="GeneID" id="3707511"/>
<dbReference type="KEGG" id="vg:3707511"/>
<dbReference type="Proteomes" id="UP000000344">
    <property type="component" value="Genome"/>
</dbReference>
<dbReference type="InterPro" id="IPR007675">
    <property type="entry name" value="Poxvirus_F15"/>
</dbReference>
<dbReference type="Pfam" id="PF04596">
    <property type="entry name" value="Pox_F15"/>
    <property type="match status" value="1"/>
</dbReference>
<dbReference type="PIRSF" id="PIRSF015694">
    <property type="entry name" value="VAC_F15L"/>
    <property type="match status" value="1"/>
</dbReference>
<sequence>MEIFNVEELINMKPFKNMNKITINQKDNCILANRCFVKIDTPRYIPSTSISSSNIIRIRNHDFTLSELLYSPFHFQQPQFQYLLPGFVLTCIDKVSKQQKKCKYCISNRGDDDSLSINLFIPTINKSIYIIIGLRMKNFWKPKFEIE</sequence>
<evidence type="ECO:0000269" key="1">
    <source>
    </source>
</evidence>
<evidence type="ECO:0000305" key="2"/>
<comment type="induction">
    <text evidence="1">Expressed in the early phase of the viral replicative cycle.</text>
</comment>
<comment type="similarity">
    <text evidence="2">Belongs to the orthopoxvirus OPG058 family.</text>
</comment>
<proteinExistence type="evidence at transcript level"/>
<keyword id="KW-0244">Early protein</keyword>
<keyword id="KW-1185">Reference proteome</keyword>
<name>PG060_VACCW</name>
<protein>
    <recommendedName>
        <fullName>Protein OPG060</fullName>
    </recommendedName>
    <alternativeName>
        <fullName>Protein F15</fullName>
    </alternativeName>
</protein>
<gene>
    <name type="primary">OPG060</name>
    <name type="ordered locus">VACWR054</name>
    <name type="ORF">F15L</name>
</gene>
<accession>Q80HX4</accession>
<organismHost>
    <name type="scientific">Bos taurus</name>
    <name type="common">Bovine</name>
    <dbReference type="NCBI Taxonomy" id="9913"/>
</organismHost>
<organism>
    <name type="scientific">Vaccinia virus (strain Western Reserve)</name>
    <name type="common">VACV</name>
    <name type="synonym">Vaccinia virus (strain WR)</name>
    <dbReference type="NCBI Taxonomy" id="10254"/>
    <lineage>
        <taxon>Viruses</taxon>
        <taxon>Varidnaviria</taxon>
        <taxon>Bamfordvirae</taxon>
        <taxon>Nucleocytoviricota</taxon>
        <taxon>Pokkesviricetes</taxon>
        <taxon>Chitovirales</taxon>
        <taxon>Poxviridae</taxon>
        <taxon>Chordopoxvirinae</taxon>
        <taxon>Orthopoxvirus</taxon>
        <taxon>Vaccinia virus</taxon>
    </lineage>
</organism>
<reference key="1">
    <citation type="submission" date="2003-02" db="EMBL/GenBank/DDBJ databases">
        <title>Sequencing of the coding region of Vaccinia-WR to an average 9-fold redundancy and an error rate of 0.16/10kb.</title>
        <authorList>
            <person name="Esposito J.J."/>
            <person name="Frace A.M."/>
            <person name="Sammons S.A."/>
            <person name="Olsen-Rasmussen M."/>
            <person name="Osborne J."/>
            <person name="Wohlhueter R."/>
        </authorList>
    </citation>
    <scope>NUCLEOTIDE SEQUENCE [LARGE SCALE GENOMIC DNA]</scope>
</reference>
<reference key="2">
    <citation type="journal article" date="2015" name="J. Virol.">
        <title>Deciphering poxvirus gene expression by RNA sequencing and ribosome profiling.</title>
        <authorList>
            <person name="Yang Z."/>
            <person name="Cao S."/>
            <person name="Martens C.A."/>
            <person name="Porcella S.F."/>
            <person name="Xie Z."/>
            <person name="Ma M."/>
            <person name="Shen B."/>
            <person name="Moss B."/>
        </authorList>
    </citation>
    <scope>INDUCTION</scope>
</reference>
<feature type="chain" id="PRO_0000418529" description="Protein OPG060">
    <location>
        <begin position="1"/>
        <end position="147"/>
    </location>
</feature>